<dbReference type="EMBL" id="CP001620">
    <property type="protein sequence ID" value="ACR17662.1"/>
    <property type="molecule type" value="Genomic_DNA"/>
</dbReference>
<dbReference type="RefSeq" id="WP_012731549.1">
    <property type="nucleotide sequence ID" value="NC_012704.1"/>
</dbReference>
<dbReference type="SMR" id="C4LIK7"/>
<dbReference type="STRING" id="645127.ckrop_0908"/>
<dbReference type="KEGG" id="ckp:ckrop_0908"/>
<dbReference type="eggNOG" id="COG1826">
    <property type="taxonomic scope" value="Bacteria"/>
</dbReference>
<dbReference type="HOGENOM" id="CLU_086034_4_0_11"/>
<dbReference type="OrthoDB" id="5245163at2"/>
<dbReference type="Proteomes" id="UP000001473">
    <property type="component" value="Chromosome"/>
</dbReference>
<dbReference type="GO" id="GO:0033281">
    <property type="term" value="C:TAT protein transport complex"/>
    <property type="evidence" value="ECO:0007669"/>
    <property type="project" value="UniProtKB-UniRule"/>
</dbReference>
<dbReference type="GO" id="GO:0008320">
    <property type="term" value="F:protein transmembrane transporter activity"/>
    <property type="evidence" value="ECO:0007669"/>
    <property type="project" value="UniProtKB-UniRule"/>
</dbReference>
<dbReference type="GO" id="GO:0043953">
    <property type="term" value="P:protein transport by the Tat complex"/>
    <property type="evidence" value="ECO:0007669"/>
    <property type="project" value="UniProtKB-UniRule"/>
</dbReference>
<dbReference type="Gene3D" id="1.20.5.3310">
    <property type="match status" value="1"/>
</dbReference>
<dbReference type="HAMAP" id="MF_00236">
    <property type="entry name" value="TatA_E"/>
    <property type="match status" value="1"/>
</dbReference>
<dbReference type="InterPro" id="IPR003369">
    <property type="entry name" value="TatA/B/E"/>
</dbReference>
<dbReference type="InterPro" id="IPR006312">
    <property type="entry name" value="TatA/E"/>
</dbReference>
<dbReference type="NCBIfam" id="NF001854">
    <property type="entry name" value="PRK00575.1"/>
    <property type="match status" value="1"/>
</dbReference>
<dbReference type="NCBIfam" id="TIGR01411">
    <property type="entry name" value="tatAE"/>
    <property type="match status" value="1"/>
</dbReference>
<dbReference type="PANTHER" id="PTHR42982">
    <property type="entry name" value="SEC-INDEPENDENT PROTEIN TRANSLOCASE PROTEIN TATA"/>
    <property type="match status" value="1"/>
</dbReference>
<dbReference type="PANTHER" id="PTHR42982:SF8">
    <property type="entry name" value="SEC-INDEPENDENT PROTEIN TRANSLOCASE PROTEIN TATA"/>
    <property type="match status" value="1"/>
</dbReference>
<dbReference type="Pfam" id="PF02416">
    <property type="entry name" value="TatA_B_E"/>
    <property type="match status" value="1"/>
</dbReference>
<dbReference type="PRINTS" id="PR01506">
    <property type="entry name" value="TATBPROTEIN"/>
</dbReference>
<name>TATA_CORK4</name>
<evidence type="ECO:0000255" key="1">
    <source>
        <dbReference type="HAMAP-Rule" id="MF_00236"/>
    </source>
</evidence>
<evidence type="ECO:0000256" key="2">
    <source>
        <dbReference type="SAM" id="MobiDB-lite"/>
    </source>
</evidence>
<keyword id="KW-1003">Cell membrane</keyword>
<keyword id="KW-0472">Membrane</keyword>
<keyword id="KW-0653">Protein transport</keyword>
<keyword id="KW-1185">Reference proteome</keyword>
<keyword id="KW-0811">Translocation</keyword>
<keyword id="KW-0812">Transmembrane</keyword>
<keyword id="KW-1133">Transmembrane helix</keyword>
<keyword id="KW-0813">Transport</keyword>
<sequence length="91" mass="9820">MANLGFPELVLIAVVILVLFGWKKLPDAARSVGRSMRIFKSEVSEMKNDGAEAEKTSAASTKTDEITSVSSTDTPQPTVTVESKDEKKHPA</sequence>
<reference key="1">
    <citation type="journal article" date="2008" name="J. Biotechnol.">
        <title>Ultrafast pyrosequencing of Corynebacterium kroppenstedtii DSM44385 revealed insights into the physiology of a lipophilic corynebacterium that lacks mycolic acids.</title>
        <authorList>
            <person name="Tauch A."/>
            <person name="Schneider J."/>
            <person name="Szczepanowski R."/>
            <person name="Tilker A."/>
            <person name="Viehoever P."/>
            <person name="Gartemann K.-H."/>
            <person name="Arnold W."/>
            <person name="Blom J."/>
            <person name="Brinkrolf K."/>
            <person name="Brune I."/>
            <person name="Goetker S."/>
            <person name="Weisshaar B."/>
            <person name="Goesmann A."/>
            <person name="Droege M."/>
            <person name="Puehler A."/>
        </authorList>
    </citation>
    <scope>NUCLEOTIDE SEQUENCE [LARGE SCALE GENOMIC DNA]</scope>
    <source>
        <strain>DSM 44385 / JCM 11950 / CIP 105744 / CCUG 35717</strain>
    </source>
</reference>
<proteinExistence type="inferred from homology"/>
<accession>C4LIK7</accession>
<gene>
    <name evidence="1" type="primary">tatA</name>
    <name type="ordered locus">ckrop_0908</name>
</gene>
<protein>
    <recommendedName>
        <fullName evidence="1">Sec-independent protein translocase protein TatA</fullName>
    </recommendedName>
</protein>
<comment type="function">
    <text evidence="1">Part of the twin-arginine translocation (Tat) system that transports large folded proteins containing a characteristic twin-arginine motif in their signal peptide across membranes. TatA could form the protein-conducting channel of the Tat system.</text>
</comment>
<comment type="subunit">
    <text evidence="1">The Tat system comprises two distinct complexes: a TatABC complex, containing multiple copies of TatA, TatB and TatC subunits, and a separate TatA complex, containing only TatA subunits. Substrates initially bind to the TatABC complex, which probably triggers association of the separate TatA complex to form the active translocon.</text>
</comment>
<comment type="subcellular location">
    <subcellularLocation>
        <location evidence="1">Cell membrane</location>
        <topology evidence="1">Single-pass membrane protein</topology>
    </subcellularLocation>
</comment>
<comment type="similarity">
    <text evidence="1">Belongs to the TatA/E family.</text>
</comment>
<organism>
    <name type="scientific">Corynebacterium kroppenstedtii (strain DSM 44385 / JCM 11950 / CIP 105744 / CCUG 35717)</name>
    <dbReference type="NCBI Taxonomy" id="645127"/>
    <lineage>
        <taxon>Bacteria</taxon>
        <taxon>Bacillati</taxon>
        <taxon>Actinomycetota</taxon>
        <taxon>Actinomycetes</taxon>
        <taxon>Mycobacteriales</taxon>
        <taxon>Corynebacteriaceae</taxon>
        <taxon>Corynebacterium</taxon>
    </lineage>
</organism>
<feature type="chain" id="PRO_1000204434" description="Sec-independent protein translocase protein TatA">
    <location>
        <begin position="1"/>
        <end position="91"/>
    </location>
</feature>
<feature type="transmembrane region" description="Helical" evidence="1">
    <location>
        <begin position="2"/>
        <end position="22"/>
    </location>
</feature>
<feature type="region of interest" description="Disordered" evidence="2">
    <location>
        <begin position="43"/>
        <end position="91"/>
    </location>
</feature>
<feature type="compositionally biased region" description="Basic and acidic residues" evidence="2">
    <location>
        <begin position="43"/>
        <end position="55"/>
    </location>
</feature>
<feature type="compositionally biased region" description="Polar residues" evidence="2">
    <location>
        <begin position="57"/>
        <end position="81"/>
    </location>
</feature>
<feature type="compositionally biased region" description="Basic and acidic residues" evidence="2">
    <location>
        <begin position="82"/>
        <end position="91"/>
    </location>
</feature>